<reference key="1">
    <citation type="submission" date="2006-12" db="EMBL/GenBank/DDBJ databases">
        <title>Complete sequence of Pyrobaculum islandicum DSM 4184.</title>
        <authorList>
            <person name="Copeland A."/>
            <person name="Lucas S."/>
            <person name="Lapidus A."/>
            <person name="Barry K."/>
            <person name="Detter J.C."/>
            <person name="Glavina del Rio T."/>
            <person name="Dalin E."/>
            <person name="Tice H."/>
            <person name="Pitluck S."/>
            <person name="Meincke L."/>
            <person name="Brettin T."/>
            <person name="Bruce D."/>
            <person name="Han C."/>
            <person name="Tapia R."/>
            <person name="Gilna P."/>
            <person name="Schmutz J."/>
            <person name="Larimer F."/>
            <person name="Land M."/>
            <person name="Hauser L."/>
            <person name="Kyrpides N."/>
            <person name="Mikhailova N."/>
            <person name="Cozen A.E."/>
            <person name="Fitz-Gibbon S.T."/>
            <person name="House C.H."/>
            <person name="Saltikov C."/>
            <person name="Lowe T."/>
            <person name="Richardson P."/>
        </authorList>
    </citation>
    <scope>NUCLEOTIDE SEQUENCE [LARGE SCALE GENOMIC DNA]</scope>
    <source>
        <strain>DSM 4184 / JCM 9189 / GEO3</strain>
    </source>
</reference>
<accession>A1RS05</accession>
<feature type="chain" id="PRO_1000052286" description="Large ribosomal subunit protein uL24">
    <location>
        <begin position="1"/>
        <end position="123"/>
    </location>
</feature>
<dbReference type="EMBL" id="CP000504">
    <property type="protein sequence ID" value="ABL87737.1"/>
    <property type="molecule type" value="Genomic_DNA"/>
</dbReference>
<dbReference type="RefSeq" id="WP_011762313.1">
    <property type="nucleotide sequence ID" value="NC_008701.1"/>
</dbReference>
<dbReference type="SMR" id="A1RS05"/>
<dbReference type="STRING" id="384616.Pisl_0559"/>
<dbReference type="GeneID" id="4617475"/>
<dbReference type="KEGG" id="pis:Pisl_0559"/>
<dbReference type="eggNOG" id="arCOG04094">
    <property type="taxonomic scope" value="Archaea"/>
</dbReference>
<dbReference type="HOGENOM" id="CLU_093240_2_1_2"/>
<dbReference type="OrthoDB" id="10899at2157"/>
<dbReference type="Proteomes" id="UP000002595">
    <property type="component" value="Chromosome"/>
</dbReference>
<dbReference type="GO" id="GO:0015934">
    <property type="term" value="C:large ribosomal subunit"/>
    <property type="evidence" value="ECO:0007669"/>
    <property type="project" value="InterPro"/>
</dbReference>
<dbReference type="GO" id="GO:0019843">
    <property type="term" value="F:rRNA binding"/>
    <property type="evidence" value="ECO:0007669"/>
    <property type="project" value="UniProtKB-UniRule"/>
</dbReference>
<dbReference type="GO" id="GO:0003735">
    <property type="term" value="F:structural constituent of ribosome"/>
    <property type="evidence" value="ECO:0007669"/>
    <property type="project" value="InterPro"/>
</dbReference>
<dbReference type="GO" id="GO:0006412">
    <property type="term" value="P:translation"/>
    <property type="evidence" value="ECO:0007669"/>
    <property type="project" value="UniProtKB-UniRule"/>
</dbReference>
<dbReference type="CDD" id="cd06089">
    <property type="entry name" value="KOW_RPL26"/>
    <property type="match status" value="1"/>
</dbReference>
<dbReference type="FunFam" id="2.30.30.30:FF:000009">
    <property type="entry name" value="60S ribosomal protein L26"/>
    <property type="match status" value="1"/>
</dbReference>
<dbReference type="Gene3D" id="2.30.30.30">
    <property type="match status" value="1"/>
</dbReference>
<dbReference type="HAMAP" id="MF_01326_A">
    <property type="entry name" value="Ribosomal_uL24_A"/>
    <property type="match status" value="1"/>
</dbReference>
<dbReference type="InterPro" id="IPR005824">
    <property type="entry name" value="KOW"/>
</dbReference>
<dbReference type="InterPro" id="IPR014722">
    <property type="entry name" value="Rib_uL2_dom2"/>
</dbReference>
<dbReference type="InterPro" id="IPR005825">
    <property type="entry name" value="Ribosomal_uL24_CS"/>
</dbReference>
<dbReference type="InterPro" id="IPR005756">
    <property type="entry name" value="Ribosomal_uL24_euk/arc"/>
</dbReference>
<dbReference type="InterPro" id="IPR041988">
    <property type="entry name" value="Ribosomal_uL24_KOW"/>
</dbReference>
<dbReference type="InterPro" id="IPR008991">
    <property type="entry name" value="Translation_prot_SH3-like_sf"/>
</dbReference>
<dbReference type="NCBIfam" id="TIGR01080">
    <property type="entry name" value="rplX_A_E"/>
    <property type="match status" value="1"/>
</dbReference>
<dbReference type="PANTHER" id="PTHR11143">
    <property type="entry name" value="60S RIBOSOMAL PROTEIN L26 FAMILY MEMBER"/>
    <property type="match status" value="1"/>
</dbReference>
<dbReference type="Pfam" id="PF00467">
    <property type="entry name" value="KOW"/>
    <property type="match status" value="1"/>
</dbReference>
<dbReference type="Pfam" id="PF16906">
    <property type="entry name" value="Ribosomal_L26"/>
    <property type="match status" value="1"/>
</dbReference>
<dbReference type="SMART" id="SM00739">
    <property type="entry name" value="KOW"/>
    <property type="match status" value="1"/>
</dbReference>
<dbReference type="SUPFAM" id="SSF50104">
    <property type="entry name" value="Translation proteins SH3-like domain"/>
    <property type="match status" value="1"/>
</dbReference>
<dbReference type="PROSITE" id="PS01108">
    <property type="entry name" value="RIBOSOMAL_L24"/>
    <property type="match status" value="1"/>
</dbReference>
<gene>
    <name evidence="1" type="primary">rpl24</name>
    <name type="ordered locus">Pisl_0559</name>
</gene>
<comment type="function">
    <text evidence="1">One of two assembly initiator proteins, it binds directly to the 5'-end of the 23S rRNA, where it nucleates assembly of the 50S subunit.</text>
</comment>
<comment type="function">
    <text evidence="1">Located at the polypeptide exit tunnel on the outside of the subunit.</text>
</comment>
<comment type="subunit">
    <text evidence="1">Part of the 50S ribosomal subunit.</text>
</comment>
<comment type="similarity">
    <text evidence="1">Belongs to the universal ribosomal protein uL24 family.</text>
</comment>
<evidence type="ECO:0000255" key="1">
    <source>
        <dbReference type="HAMAP-Rule" id="MF_01326"/>
    </source>
</evidence>
<evidence type="ECO:0000305" key="2"/>
<organism>
    <name type="scientific">Pyrobaculum islandicum (strain DSM 4184 / JCM 9189 / GEO3)</name>
    <dbReference type="NCBI Taxonomy" id="384616"/>
    <lineage>
        <taxon>Archaea</taxon>
        <taxon>Thermoproteota</taxon>
        <taxon>Thermoprotei</taxon>
        <taxon>Thermoproteales</taxon>
        <taxon>Thermoproteaceae</taxon>
        <taxon>Pyrobaculum</taxon>
    </lineage>
</organism>
<name>RL24_PYRIL</name>
<protein>
    <recommendedName>
        <fullName evidence="1">Large ribosomal subunit protein uL24</fullName>
    </recommendedName>
    <alternativeName>
        <fullName evidence="2">50S ribosomal protein L24</fullName>
    </alternativeName>
</protein>
<keyword id="KW-0687">Ribonucleoprotein</keyword>
<keyword id="KW-0689">Ribosomal protein</keyword>
<keyword id="KW-0694">RNA-binding</keyword>
<keyword id="KW-0699">rRNA-binding</keyword>
<proteinExistence type="inferred from homology"/>
<sequence>MPFTTSIQPRRQRLSLYTAPLHLRHKLFNAKLSPDLQKKLGVKRLPVRRGDTVMIMRGDFKGVTGKVVKVDLKKVRIYVEGATRTNSKGQTVYYPIHPSKVMIIDIDTSDKIRQKIIQRRKKE</sequence>